<proteinExistence type="inferred from homology"/>
<protein>
    <recommendedName>
        <fullName evidence="1">Methylenetetrahydrofolate--tRNA-(uracil-5-)-methyltransferase TrmFO</fullName>
        <ecNumber evidence="1">2.1.1.74</ecNumber>
    </recommendedName>
    <alternativeName>
        <fullName evidence="1">Folate-dependent tRNA (uracil-5-)-methyltransferase</fullName>
    </alternativeName>
    <alternativeName>
        <fullName evidence="1">Folate-dependent tRNA(M-5-U54)-methyltransferase</fullName>
    </alternativeName>
</protein>
<feature type="chain" id="PRO_0000346405" description="Methylenetetrahydrofolate--tRNA-(uracil-5-)-methyltransferase TrmFO">
    <location>
        <begin position="1"/>
        <end position="459"/>
    </location>
</feature>
<feature type="binding site" evidence="1">
    <location>
        <begin position="11"/>
        <end position="16"/>
    </location>
    <ligand>
        <name>FAD</name>
        <dbReference type="ChEBI" id="CHEBI:57692"/>
    </ligand>
</feature>
<sequence length="459" mass="50732">MSEQSSVVVIGAGLAGTEAAWQVAKAGVPVTLWEMRPFKRSPAHHSSEFAELVCSNSFGALSSDRAAGLLQEELRRLGSLVIQTADHHSVPAGGALAVDRGRYSAALTSALDDHPLVTIRREEQLTLPDPDQIAVLATGPLTSEALADDLRAFTGREDCHFFDAASPIVEGESIDMTKAFRASRYDKGDADYINCPMDQDQFLAFRAALLDAEQAELKDFDQNSATFFEGCLPIEELARRGEDTMRYGPLKPIGLWDPRWGDVNDRDVRRAKRAYAVVQLRQEDKDGRLWNLVGFQTNLKWGEQKRVLRLIPGLEQADFVRFGVMHRNTFLEAPELLEPTLQFRRRPHLLAAGQITGTEGYAAAVAGGWLAGTNAARLVHGHDPMQLPHTTMIGALTHFISEAPSGKFQPMPPNFGLMPQLQECIREKRARYGAYRDRALADLQRTIDESQVDNVVCTA</sequence>
<accession>Q0IB24</accession>
<keyword id="KW-0963">Cytoplasm</keyword>
<keyword id="KW-0274">FAD</keyword>
<keyword id="KW-0285">Flavoprotein</keyword>
<keyword id="KW-0489">Methyltransferase</keyword>
<keyword id="KW-0520">NAD</keyword>
<keyword id="KW-0521">NADP</keyword>
<keyword id="KW-1185">Reference proteome</keyword>
<keyword id="KW-0808">Transferase</keyword>
<keyword id="KW-0819">tRNA processing</keyword>
<name>TRMFO_SYNS3</name>
<reference key="1">
    <citation type="journal article" date="2006" name="Proc. Natl. Acad. Sci. U.S.A.">
        <title>Genome sequence of Synechococcus CC9311: insights into adaptation to a coastal environment.</title>
        <authorList>
            <person name="Palenik B."/>
            <person name="Ren Q."/>
            <person name="Dupont C.L."/>
            <person name="Myers G.S."/>
            <person name="Heidelberg J.F."/>
            <person name="Badger J.H."/>
            <person name="Madupu R."/>
            <person name="Nelson W.C."/>
            <person name="Brinkac L.M."/>
            <person name="Dodson R.J."/>
            <person name="Durkin A.S."/>
            <person name="Daugherty S.C."/>
            <person name="Sullivan S.A."/>
            <person name="Khouri H."/>
            <person name="Mohamoud Y."/>
            <person name="Halpin R."/>
            <person name="Paulsen I.T."/>
        </authorList>
    </citation>
    <scope>NUCLEOTIDE SEQUENCE [LARGE SCALE GENOMIC DNA]</scope>
    <source>
        <strain>CC9311</strain>
    </source>
</reference>
<comment type="function">
    <text evidence="1">Catalyzes the folate-dependent formation of 5-methyl-uridine at position 54 (M-5-U54) in all tRNAs.</text>
</comment>
<comment type="catalytic activity">
    <reaction evidence="1">
        <text>uridine(54) in tRNA + (6R)-5,10-methylene-5,6,7,8-tetrahydrofolate + NADH + H(+) = 5-methyluridine(54) in tRNA + (6S)-5,6,7,8-tetrahydrofolate + NAD(+)</text>
        <dbReference type="Rhea" id="RHEA:16873"/>
        <dbReference type="Rhea" id="RHEA-COMP:10167"/>
        <dbReference type="Rhea" id="RHEA-COMP:10193"/>
        <dbReference type="ChEBI" id="CHEBI:15378"/>
        <dbReference type="ChEBI" id="CHEBI:15636"/>
        <dbReference type="ChEBI" id="CHEBI:57453"/>
        <dbReference type="ChEBI" id="CHEBI:57540"/>
        <dbReference type="ChEBI" id="CHEBI:57945"/>
        <dbReference type="ChEBI" id="CHEBI:65315"/>
        <dbReference type="ChEBI" id="CHEBI:74447"/>
        <dbReference type="EC" id="2.1.1.74"/>
    </reaction>
</comment>
<comment type="catalytic activity">
    <reaction evidence="1">
        <text>uridine(54) in tRNA + (6R)-5,10-methylene-5,6,7,8-tetrahydrofolate + NADPH + H(+) = 5-methyluridine(54) in tRNA + (6S)-5,6,7,8-tetrahydrofolate + NADP(+)</text>
        <dbReference type="Rhea" id="RHEA:62372"/>
        <dbReference type="Rhea" id="RHEA-COMP:10167"/>
        <dbReference type="Rhea" id="RHEA-COMP:10193"/>
        <dbReference type="ChEBI" id="CHEBI:15378"/>
        <dbReference type="ChEBI" id="CHEBI:15636"/>
        <dbReference type="ChEBI" id="CHEBI:57453"/>
        <dbReference type="ChEBI" id="CHEBI:57783"/>
        <dbReference type="ChEBI" id="CHEBI:58349"/>
        <dbReference type="ChEBI" id="CHEBI:65315"/>
        <dbReference type="ChEBI" id="CHEBI:74447"/>
        <dbReference type="EC" id="2.1.1.74"/>
    </reaction>
</comment>
<comment type="cofactor">
    <cofactor evidence="1">
        <name>FAD</name>
        <dbReference type="ChEBI" id="CHEBI:57692"/>
    </cofactor>
</comment>
<comment type="subcellular location">
    <subcellularLocation>
        <location evidence="1">Cytoplasm</location>
    </subcellularLocation>
</comment>
<comment type="similarity">
    <text evidence="1">Belongs to the MnmG family. TrmFO subfamily.</text>
</comment>
<gene>
    <name evidence="1" type="primary">trmFO</name>
    <name type="ordered locus">sync_1138</name>
</gene>
<organism>
    <name type="scientific">Synechococcus sp. (strain CC9311)</name>
    <dbReference type="NCBI Taxonomy" id="64471"/>
    <lineage>
        <taxon>Bacteria</taxon>
        <taxon>Bacillati</taxon>
        <taxon>Cyanobacteriota</taxon>
        <taxon>Cyanophyceae</taxon>
        <taxon>Synechococcales</taxon>
        <taxon>Synechococcaceae</taxon>
        <taxon>Synechococcus</taxon>
    </lineage>
</organism>
<evidence type="ECO:0000255" key="1">
    <source>
        <dbReference type="HAMAP-Rule" id="MF_01037"/>
    </source>
</evidence>
<dbReference type="EC" id="2.1.1.74" evidence="1"/>
<dbReference type="EMBL" id="CP000435">
    <property type="protein sequence ID" value="ABI46134.1"/>
    <property type="molecule type" value="Genomic_DNA"/>
</dbReference>
<dbReference type="RefSeq" id="WP_011619069.1">
    <property type="nucleotide sequence ID" value="NC_008319.1"/>
</dbReference>
<dbReference type="SMR" id="Q0IB24"/>
<dbReference type="STRING" id="64471.sync_1138"/>
<dbReference type="KEGG" id="syg:sync_1138"/>
<dbReference type="eggNOG" id="COG1206">
    <property type="taxonomic scope" value="Bacteria"/>
</dbReference>
<dbReference type="HOGENOM" id="CLU_033057_1_0_3"/>
<dbReference type="OrthoDB" id="9803114at2"/>
<dbReference type="Proteomes" id="UP000001961">
    <property type="component" value="Chromosome"/>
</dbReference>
<dbReference type="GO" id="GO:0005829">
    <property type="term" value="C:cytosol"/>
    <property type="evidence" value="ECO:0007669"/>
    <property type="project" value="TreeGrafter"/>
</dbReference>
<dbReference type="GO" id="GO:0050660">
    <property type="term" value="F:flavin adenine dinucleotide binding"/>
    <property type="evidence" value="ECO:0007669"/>
    <property type="project" value="UniProtKB-UniRule"/>
</dbReference>
<dbReference type="GO" id="GO:0047151">
    <property type="term" value="F:tRNA (uracil(54)-C5)-methyltransferase activity, 5,10-methylenetetrahydrofolate-dependent"/>
    <property type="evidence" value="ECO:0007669"/>
    <property type="project" value="UniProtKB-UniRule"/>
</dbReference>
<dbReference type="GO" id="GO:0030488">
    <property type="term" value="P:tRNA methylation"/>
    <property type="evidence" value="ECO:0007669"/>
    <property type="project" value="TreeGrafter"/>
</dbReference>
<dbReference type="GO" id="GO:0002098">
    <property type="term" value="P:tRNA wobble uridine modification"/>
    <property type="evidence" value="ECO:0007669"/>
    <property type="project" value="TreeGrafter"/>
</dbReference>
<dbReference type="Gene3D" id="3.50.50.60">
    <property type="entry name" value="FAD/NAD(P)-binding domain"/>
    <property type="match status" value="2"/>
</dbReference>
<dbReference type="HAMAP" id="MF_01037">
    <property type="entry name" value="TrmFO"/>
    <property type="match status" value="1"/>
</dbReference>
<dbReference type="InterPro" id="IPR036188">
    <property type="entry name" value="FAD/NAD-bd_sf"/>
</dbReference>
<dbReference type="InterPro" id="IPR002218">
    <property type="entry name" value="MnmG-rel"/>
</dbReference>
<dbReference type="InterPro" id="IPR040131">
    <property type="entry name" value="MnmG_N"/>
</dbReference>
<dbReference type="InterPro" id="IPR004417">
    <property type="entry name" value="TrmFO"/>
</dbReference>
<dbReference type="NCBIfam" id="TIGR00137">
    <property type="entry name" value="gid_trmFO"/>
    <property type="match status" value="1"/>
</dbReference>
<dbReference type="NCBIfam" id="NF003739">
    <property type="entry name" value="PRK05335.1"/>
    <property type="match status" value="1"/>
</dbReference>
<dbReference type="PANTHER" id="PTHR11806">
    <property type="entry name" value="GLUCOSE INHIBITED DIVISION PROTEIN A"/>
    <property type="match status" value="1"/>
</dbReference>
<dbReference type="PANTHER" id="PTHR11806:SF2">
    <property type="entry name" value="METHYLENETETRAHYDROFOLATE--TRNA-(URACIL-5-)-METHYLTRANSFERASE TRMFO"/>
    <property type="match status" value="1"/>
</dbReference>
<dbReference type="Pfam" id="PF01134">
    <property type="entry name" value="GIDA"/>
    <property type="match status" value="1"/>
</dbReference>
<dbReference type="PRINTS" id="PR00411">
    <property type="entry name" value="PNDRDTASEI"/>
</dbReference>
<dbReference type="SUPFAM" id="SSF51905">
    <property type="entry name" value="FAD/NAD(P)-binding domain"/>
    <property type="match status" value="1"/>
</dbReference>